<sequence length="372" mass="40258">MSERSYYDILGVSKSANDEEIKSAYRKLAIKYHPDKNKGNKESEEKFKEATEAYEILRDPKKRQAYDQFGKAGVSGGAGGFGQGAYTDFSDIFGDFGDIFGDFFGGGRSSGFGGGRRSGPQRGSDLRYNLEVSLEDAALGREYKIEIPRLESCVDCNGSGASKGSSPATCPDCGGSGQIRRTQGFFSVATTCPTCRGKGTIISNPCRSCGGQGLQEKRRTINIKIPPGVETGSRLKVSGEGEAGPNGGPHGDLYVVTHIKKHELFERQGNDLILVRKISLAQAILGAEIEVPTIDGKKAKMKIPEGTESGQVFRLKGHGMPYLGAYGKGDQHVIVKIEIPKKITRRQRELIEEFARESGENIPGSKGKIFTK</sequence>
<gene>
    <name evidence="1" type="primary">dnaJ</name>
    <name type="ordered locus">LA_3706</name>
</gene>
<organism>
    <name type="scientific">Leptospira interrogans serogroup Icterohaemorrhagiae serovar Lai (strain 56601)</name>
    <dbReference type="NCBI Taxonomy" id="189518"/>
    <lineage>
        <taxon>Bacteria</taxon>
        <taxon>Pseudomonadati</taxon>
        <taxon>Spirochaetota</taxon>
        <taxon>Spirochaetia</taxon>
        <taxon>Leptospirales</taxon>
        <taxon>Leptospiraceae</taxon>
        <taxon>Leptospira</taxon>
    </lineage>
</organism>
<protein>
    <recommendedName>
        <fullName evidence="1">Chaperone protein DnaJ</fullName>
    </recommendedName>
</protein>
<name>DNAJ_LEPIN</name>
<proteinExistence type="inferred from homology"/>
<feature type="chain" id="PRO_0000070812" description="Chaperone protein DnaJ">
    <location>
        <begin position="1"/>
        <end position="372"/>
    </location>
</feature>
<feature type="domain" description="J" evidence="1">
    <location>
        <begin position="5"/>
        <end position="70"/>
    </location>
</feature>
<feature type="repeat" description="CXXCXGXG motif">
    <location>
        <begin position="153"/>
        <end position="160"/>
    </location>
</feature>
<feature type="repeat" description="CXXCXGXG motif">
    <location>
        <begin position="170"/>
        <end position="177"/>
    </location>
</feature>
<feature type="repeat" description="CXXCXGXG motif">
    <location>
        <begin position="192"/>
        <end position="199"/>
    </location>
</feature>
<feature type="repeat" description="CXXCXGXG motif">
    <location>
        <begin position="206"/>
        <end position="213"/>
    </location>
</feature>
<feature type="zinc finger region" description="CR-type" evidence="1">
    <location>
        <begin position="140"/>
        <end position="218"/>
    </location>
</feature>
<feature type="binding site" evidence="1">
    <location>
        <position position="153"/>
    </location>
    <ligand>
        <name>Zn(2+)</name>
        <dbReference type="ChEBI" id="CHEBI:29105"/>
        <label>1</label>
    </ligand>
</feature>
<feature type="binding site" evidence="1">
    <location>
        <position position="156"/>
    </location>
    <ligand>
        <name>Zn(2+)</name>
        <dbReference type="ChEBI" id="CHEBI:29105"/>
        <label>1</label>
    </ligand>
</feature>
<feature type="binding site" evidence="1">
    <location>
        <position position="170"/>
    </location>
    <ligand>
        <name>Zn(2+)</name>
        <dbReference type="ChEBI" id="CHEBI:29105"/>
        <label>2</label>
    </ligand>
</feature>
<feature type="binding site" evidence="1">
    <location>
        <position position="173"/>
    </location>
    <ligand>
        <name>Zn(2+)</name>
        <dbReference type="ChEBI" id="CHEBI:29105"/>
        <label>2</label>
    </ligand>
</feature>
<feature type="binding site" evidence="1">
    <location>
        <position position="192"/>
    </location>
    <ligand>
        <name>Zn(2+)</name>
        <dbReference type="ChEBI" id="CHEBI:29105"/>
        <label>2</label>
    </ligand>
</feature>
<feature type="binding site" evidence="1">
    <location>
        <position position="195"/>
    </location>
    <ligand>
        <name>Zn(2+)</name>
        <dbReference type="ChEBI" id="CHEBI:29105"/>
        <label>2</label>
    </ligand>
</feature>
<feature type="binding site" evidence="1">
    <location>
        <position position="206"/>
    </location>
    <ligand>
        <name>Zn(2+)</name>
        <dbReference type="ChEBI" id="CHEBI:29105"/>
        <label>1</label>
    </ligand>
</feature>
<feature type="binding site" evidence="1">
    <location>
        <position position="209"/>
    </location>
    <ligand>
        <name>Zn(2+)</name>
        <dbReference type="ChEBI" id="CHEBI:29105"/>
        <label>1</label>
    </ligand>
</feature>
<dbReference type="EMBL" id="AE010300">
    <property type="protein sequence ID" value="AAN50905.1"/>
    <property type="molecule type" value="Genomic_DNA"/>
</dbReference>
<dbReference type="EMBL" id="U72647">
    <property type="protein sequence ID" value="AAB17396.1"/>
    <property type="molecule type" value="Genomic_DNA"/>
</dbReference>
<dbReference type="RefSeq" id="NP_713887.1">
    <property type="nucleotide sequence ID" value="NC_004342.2"/>
</dbReference>
<dbReference type="RefSeq" id="WP_000004170.1">
    <property type="nucleotide sequence ID" value="NC_004342.2"/>
</dbReference>
<dbReference type="SMR" id="P61441"/>
<dbReference type="FunCoup" id="P61441">
    <property type="interactions" value="534"/>
</dbReference>
<dbReference type="STRING" id="189518.LA_3706"/>
<dbReference type="PaxDb" id="189518-LA_3706"/>
<dbReference type="EnsemblBacteria" id="AAN50905">
    <property type="protein sequence ID" value="AAN50905"/>
    <property type="gene ID" value="LA_3706"/>
</dbReference>
<dbReference type="GeneID" id="61143878"/>
<dbReference type="KEGG" id="lil:LA_3706"/>
<dbReference type="PATRIC" id="fig|189518.3.peg.3682"/>
<dbReference type="HOGENOM" id="CLU_017633_0_7_12"/>
<dbReference type="InParanoid" id="P61441"/>
<dbReference type="OrthoDB" id="9779889at2"/>
<dbReference type="Proteomes" id="UP000001408">
    <property type="component" value="Chromosome I"/>
</dbReference>
<dbReference type="GO" id="GO:0005737">
    <property type="term" value="C:cytoplasm"/>
    <property type="evidence" value="ECO:0000318"/>
    <property type="project" value="GO_Central"/>
</dbReference>
<dbReference type="GO" id="GO:0005524">
    <property type="term" value="F:ATP binding"/>
    <property type="evidence" value="ECO:0007669"/>
    <property type="project" value="InterPro"/>
</dbReference>
<dbReference type="GO" id="GO:0031072">
    <property type="term" value="F:heat shock protein binding"/>
    <property type="evidence" value="ECO:0007669"/>
    <property type="project" value="InterPro"/>
</dbReference>
<dbReference type="GO" id="GO:0051082">
    <property type="term" value="F:unfolded protein binding"/>
    <property type="evidence" value="ECO:0000318"/>
    <property type="project" value="GO_Central"/>
</dbReference>
<dbReference type="GO" id="GO:0008270">
    <property type="term" value="F:zinc ion binding"/>
    <property type="evidence" value="ECO:0007669"/>
    <property type="project" value="UniProtKB-UniRule"/>
</dbReference>
<dbReference type="GO" id="GO:0051085">
    <property type="term" value="P:chaperone cofactor-dependent protein refolding"/>
    <property type="evidence" value="ECO:0000318"/>
    <property type="project" value="GO_Central"/>
</dbReference>
<dbReference type="GO" id="GO:0006260">
    <property type="term" value="P:DNA replication"/>
    <property type="evidence" value="ECO:0007669"/>
    <property type="project" value="UniProtKB-KW"/>
</dbReference>
<dbReference type="GO" id="GO:0042026">
    <property type="term" value="P:protein refolding"/>
    <property type="evidence" value="ECO:0000318"/>
    <property type="project" value="GO_Central"/>
</dbReference>
<dbReference type="GO" id="GO:0009408">
    <property type="term" value="P:response to heat"/>
    <property type="evidence" value="ECO:0007669"/>
    <property type="project" value="InterPro"/>
</dbReference>
<dbReference type="CDD" id="cd06257">
    <property type="entry name" value="DnaJ"/>
    <property type="match status" value="1"/>
</dbReference>
<dbReference type="CDD" id="cd10747">
    <property type="entry name" value="DnaJ_C"/>
    <property type="match status" value="1"/>
</dbReference>
<dbReference type="CDD" id="cd10719">
    <property type="entry name" value="DnaJ_zf"/>
    <property type="match status" value="1"/>
</dbReference>
<dbReference type="FunFam" id="1.10.287.110:FF:000034">
    <property type="entry name" value="Chaperone protein DnaJ"/>
    <property type="match status" value="1"/>
</dbReference>
<dbReference type="FunFam" id="2.60.260.20:FF:000005">
    <property type="entry name" value="Chaperone protein dnaJ 1, mitochondrial"/>
    <property type="match status" value="1"/>
</dbReference>
<dbReference type="FunFam" id="2.10.230.10:FF:000002">
    <property type="entry name" value="Molecular chaperone DnaJ"/>
    <property type="match status" value="1"/>
</dbReference>
<dbReference type="Gene3D" id="1.10.287.110">
    <property type="entry name" value="DnaJ domain"/>
    <property type="match status" value="1"/>
</dbReference>
<dbReference type="Gene3D" id="2.10.230.10">
    <property type="entry name" value="Heat shock protein DnaJ, cysteine-rich domain"/>
    <property type="match status" value="1"/>
</dbReference>
<dbReference type="Gene3D" id="2.60.260.20">
    <property type="entry name" value="Urease metallochaperone UreE, N-terminal domain"/>
    <property type="match status" value="2"/>
</dbReference>
<dbReference type="HAMAP" id="MF_01152">
    <property type="entry name" value="DnaJ"/>
    <property type="match status" value="1"/>
</dbReference>
<dbReference type="InterPro" id="IPR012724">
    <property type="entry name" value="DnaJ"/>
</dbReference>
<dbReference type="InterPro" id="IPR002939">
    <property type="entry name" value="DnaJ_C"/>
</dbReference>
<dbReference type="InterPro" id="IPR001623">
    <property type="entry name" value="DnaJ_domain"/>
</dbReference>
<dbReference type="InterPro" id="IPR018253">
    <property type="entry name" value="DnaJ_domain_CS"/>
</dbReference>
<dbReference type="InterPro" id="IPR008971">
    <property type="entry name" value="HSP40/DnaJ_pept-bd"/>
</dbReference>
<dbReference type="InterPro" id="IPR001305">
    <property type="entry name" value="HSP_DnaJ_Cys-rich_dom"/>
</dbReference>
<dbReference type="InterPro" id="IPR036410">
    <property type="entry name" value="HSP_DnaJ_Cys-rich_dom_sf"/>
</dbReference>
<dbReference type="InterPro" id="IPR036869">
    <property type="entry name" value="J_dom_sf"/>
</dbReference>
<dbReference type="NCBIfam" id="TIGR02349">
    <property type="entry name" value="DnaJ_bact"/>
    <property type="match status" value="1"/>
</dbReference>
<dbReference type="NCBIfam" id="NF008035">
    <property type="entry name" value="PRK10767.1"/>
    <property type="match status" value="1"/>
</dbReference>
<dbReference type="NCBIfam" id="NF010879">
    <property type="entry name" value="PRK14286.1"/>
    <property type="match status" value="1"/>
</dbReference>
<dbReference type="PANTHER" id="PTHR43096:SF48">
    <property type="entry name" value="CHAPERONE PROTEIN DNAJ"/>
    <property type="match status" value="1"/>
</dbReference>
<dbReference type="PANTHER" id="PTHR43096">
    <property type="entry name" value="DNAJ HOMOLOG 1, MITOCHONDRIAL-RELATED"/>
    <property type="match status" value="1"/>
</dbReference>
<dbReference type="Pfam" id="PF00226">
    <property type="entry name" value="DnaJ"/>
    <property type="match status" value="1"/>
</dbReference>
<dbReference type="Pfam" id="PF01556">
    <property type="entry name" value="DnaJ_C"/>
    <property type="match status" value="1"/>
</dbReference>
<dbReference type="Pfam" id="PF00684">
    <property type="entry name" value="DnaJ_CXXCXGXG"/>
    <property type="match status" value="1"/>
</dbReference>
<dbReference type="PRINTS" id="PR00625">
    <property type="entry name" value="JDOMAIN"/>
</dbReference>
<dbReference type="SMART" id="SM00271">
    <property type="entry name" value="DnaJ"/>
    <property type="match status" value="1"/>
</dbReference>
<dbReference type="SUPFAM" id="SSF46565">
    <property type="entry name" value="Chaperone J-domain"/>
    <property type="match status" value="1"/>
</dbReference>
<dbReference type="SUPFAM" id="SSF57938">
    <property type="entry name" value="DnaJ/Hsp40 cysteine-rich domain"/>
    <property type="match status" value="1"/>
</dbReference>
<dbReference type="SUPFAM" id="SSF49493">
    <property type="entry name" value="HSP40/DnaJ peptide-binding domain"/>
    <property type="match status" value="2"/>
</dbReference>
<dbReference type="PROSITE" id="PS00636">
    <property type="entry name" value="DNAJ_1"/>
    <property type="match status" value="1"/>
</dbReference>
<dbReference type="PROSITE" id="PS50076">
    <property type="entry name" value="DNAJ_2"/>
    <property type="match status" value="1"/>
</dbReference>
<dbReference type="PROSITE" id="PS51188">
    <property type="entry name" value="ZF_CR"/>
    <property type="match status" value="1"/>
</dbReference>
<keyword id="KW-0143">Chaperone</keyword>
<keyword id="KW-0963">Cytoplasm</keyword>
<keyword id="KW-0235">DNA replication</keyword>
<keyword id="KW-0479">Metal-binding</keyword>
<keyword id="KW-1185">Reference proteome</keyword>
<keyword id="KW-0677">Repeat</keyword>
<keyword id="KW-0346">Stress response</keyword>
<keyword id="KW-0862">Zinc</keyword>
<keyword id="KW-0863">Zinc-finger</keyword>
<accession>P61441</accession>
<accession>P71443</accession>
<reference key="1">
    <citation type="journal article" date="2003" name="Nature">
        <title>Unique physiological and pathogenic features of Leptospira interrogans revealed by whole-genome sequencing.</title>
        <authorList>
            <person name="Ren S.-X."/>
            <person name="Fu G."/>
            <person name="Jiang X.-G."/>
            <person name="Zeng R."/>
            <person name="Miao Y.-G."/>
            <person name="Xu H."/>
            <person name="Zhang Y.-X."/>
            <person name="Xiong H."/>
            <person name="Lu G."/>
            <person name="Lu L.-F."/>
            <person name="Jiang H.-Q."/>
            <person name="Jia J."/>
            <person name="Tu Y.-F."/>
            <person name="Jiang J.-X."/>
            <person name="Gu W.-Y."/>
            <person name="Zhang Y.-Q."/>
            <person name="Cai Z."/>
            <person name="Sheng H.-H."/>
            <person name="Yin H.-F."/>
            <person name="Zhang Y."/>
            <person name="Zhu G.-F."/>
            <person name="Wan M."/>
            <person name="Huang H.-L."/>
            <person name="Qian Z."/>
            <person name="Wang S.-Y."/>
            <person name="Ma W."/>
            <person name="Yao Z.-J."/>
            <person name="Shen Y."/>
            <person name="Qiang B.-Q."/>
            <person name="Xia Q.-C."/>
            <person name="Guo X.-K."/>
            <person name="Danchin A."/>
            <person name="Saint Girons I."/>
            <person name="Somerville R.L."/>
            <person name="Wen Y.-M."/>
            <person name="Shi M.-H."/>
            <person name="Chen Z."/>
            <person name="Xu J.-G."/>
            <person name="Zhao G.-P."/>
        </authorList>
    </citation>
    <scope>NUCLEOTIDE SEQUENCE [LARGE SCALE GENOMIC DNA]</scope>
    <source>
        <strain>56601</strain>
    </source>
</reference>
<reference key="2">
    <citation type="submission" date="1996-09" db="EMBL/GenBank/DDBJ databases">
        <title>Leptospira interrogans serovar pomona dnaK.</title>
        <authorList>
            <person name="Gul B."/>
            <person name="Yelton D."/>
        </authorList>
    </citation>
    <scope>NUCLEOTIDE SEQUENCE [GENOMIC DNA] OF 1-35</scope>
    <source>
        <strain>Serogroup Pomona</strain>
    </source>
</reference>
<comment type="function">
    <text evidence="1">Participates actively in the response to hyperosmotic and heat shock by preventing the aggregation of stress-denatured proteins and by disaggregating proteins, also in an autonomous, DnaK-independent fashion. Unfolded proteins bind initially to DnaJ; upon interaction with the DnaJ-bound protein, DnaK hydrolyzes its bound ATP, resulting in the formation of a stable complex. GrpE releases ADP from DnaK; ATP binding to DnaK triggers the release of the substrate protein, thus completing the reaction cycle. Several rounds of ATP-dependent interactions between DnaJ, DnaK and GrpE are required for fully efficient folding. Also involved, together with DnaK and GrpE, in the DNA replication of plasmids through activation of initiation proteins.</text>
</comment>
<comment type="cofactor">
    <cofactor evidence="1">
        <name>Zn(2+)</name>
        <dbReference type="ChEBI" id="CHEBI:29105"/>
    </cofactor>
    <text evidence="1">Binds 2 Zn(2+) ions per monomer.</text>
</comment>
<comment type="subunit">
    <text evidence="1">Homodimer.</text>
</comment>
<comment type="subcellular location">
    <subcellularLocation>
        <location evidence="1">Cytoplasm</location>
    </subcellularLocation>
</comment>
<comment type="domain">
    <text evidence="1">The J domain is necessary and sufficient to stimulate DnaK ATPase activity. Zinc center 1 plays an important role in the autonomous, DnaK-independent chaperone activity of DnaJ. Zinc center 2 is essential for interaction with DnaK and for DnaJ activity.</text>
</comment>
<comment type="similarity">
    <text evidence="1">Belongs to the DnaJ family.</text>
</comment>
<evidence type="ECO:0000255" key="1">
    <source>
        <dbReference type="HAMAP-Rule" id="MF_01152"/>
    </source>
</evidence>